<dbReference type="EMBL" id="AM406670">
    <property type="protein sequence ID" value="CAL94669.1"/>
    <property type="status" value="ALT_INIT"/>
    <property type="molecule type" value="Genomic_DNA"/>
</dbReference>
<dbReference type="SMR" id="A1K764"/>
<dbReference type="STRING" id="62928.azo2052"/>
<dbReference type="KEGG" id="azo:azo2052"/>
<dbReference type="eggNOG" id="COG0249">
    <property type="taxonomic scope" value="Bacteria"/>
</dbReference>
<dbReference type="HOGENOM" id="CLU_002472_4_0_4"/>
<dbReference type="Proteomes" id="UP000002588">
    <property type="component" value="Chromosome"/>
</dbReference>
<dbReference type="GO" id="GO:0005829">
    <property type="term" value="C:cytosol"/>
    <property type="evidence" value="ECO:0007669"/>
    <property type="project" value="TreeGrafter"/>
</dbReference>
<dbReference type="GO" id="GO:0005524">
    <property type="term" value="F:ATP binding"/>
    <property type="evidence" value="ECO:0007669"/>
    <property type="project" value="UniProtKB-UniRule"/>
</dbReference>
<dbReference type="GO" id="GO:0140664">
    <property type="term" value="F:ATP-dependent DNA damage sensor activity"/>
    <property type="evidence" value="ECO:0007669"/>
    <property type="project" value="InterPro"/>
</dbReference>
<dbReference type="GO" id="GO:0003684">
    <property type="term" value="F:damaged DNA binding"/>
    <property type="evidence" value="ECO:0007669"/>
    <property type="project" value="UniProtKB-UniRule"/>
</dbReference>
<dbReference type="GO" id="GO:0030983">
    <property type="term" value="F:mismatched DNA binding"/>
    <property type="evidence" value="ECO:0007669"/>
    <property type="project" value="InterPro"/>
</dbReference>
<dbReference type="GO" id="GO:0006298">
    <property type="term" value="P:mismatch repair"/>
    <property type="evidence" value="ECO:0007669"/>
    <property type="project" value="UniProtKB-UniRule"/>
</dbReference>
<dbReference type="CDD" id="cd03284">
    <property type="entry name" value="ABC_MutS1"/>
    <property type="match status" value="1"/>
</dbReference>
<dbReference type="FunFam" id="3.40.1170.10:FF:000001">
    <property type="entry name" value="DNA mismatch repair protein MutS"/>
    <property type="match status" value="1"/>
</dbReference>
<dbReference type="FunFam" id="3.40.50.300:FF:000870">
    <property type="entry name" value="MutS protein homolog 4"/>
    <property type="match status" value="1"/>
</dbReference>
<dbReference type="Gene3D" id="1.10.1420.10">
    <property type="match status" value="2"/>
</dbReference>
<dbReference type="Gene3D" id="6.10.140.430">
    <property type="match status" value="1"/>
</dbReference>
<dbReference type="Gene3D" id="3.40.1170.10">
    <property type="entry name" value="DNA repair protein MutS, domain I"/>
    <property type="match status" value="1"/>
</dbReference>
<dbReference type="Gene3D" id="3.30.420.110">
    <property type="entry name" value="MutS, connector domain"/>
    <property type="match status" value="1"/>
</dbReference>
<dbReference type="Gene3D" id="3.40.50.300">
    <property type="entry name" value="P-loop containing nucleotide triphosphate hydrolases"/>
    <property type="match status" value="1"/>
</dbReference>
<dbReference type="HAMAP" id="MF_00096">
    <property type="entry name" value="MutS"/>
    <property type="match status" value="1"/>
</dbReference>
<dbReference type="InterPro" id="IPR005748">
    <property type="entry name" value="DNA_mismatch_repair_MutS"/>
</dbReference>
<dbReference type="InterPro" id="IPR007695">
    <property type="entry name" value="DNA_mismatch_repair_MutS-lik_N"/>
</dbReference>
<dbReference type="InterPro" id="IPR017261">
    <property type="entry name" value="DNA_mismatch_repair_MutS/MSH"/>
</dbReference>
<dbReference type="InterPro" id="IPR000432">
    <property type="entry name" value="DNA_mismatch_repair_MutS_C"/>
</dbReference>
<dbReference type="InterPro" id="IPR007861">
    <property type="entry name" value="DNA_mismatch_repair_MutS_clamp"/>
</dbReference>
<dbReference type="InterPro" id="IPR007696">
    <property type="entry name" value="DNA_mismatch_repair_MutS_core"/>
</dbReference>
<dbReference type="InterPro" id="IPR016151">
    <property type="entry name" value="DNA_mismatch_repair_MutS_N"/>
</dbReference>
<dbReference type="InterPro" id="IPR036187">
    <property type="entry name" value="DNA_mismatch_repair_MutS_sf"/>
</dbReference>
<dbReference type="InterPro" id="IPR007860">
    <property type="entry name" value="DNA_mmatch_repair_MutS_con_dom"/>
</dbReference>
<dbReference type="InterPro" id="IPR045076">
    <property type="entry name" value="MutS"/>
</dbReference>
<dbReference type="InterPro" id="IPR036678">
    <property type="entry name" value="MutS_con_dom_sf"/>
</dbReference>
<dbReference type="InterPro" id="IPR027417">
    <property type="entry name" value="P-loop_NTPase"/>
</dbReference>
<dbReference type="NCBIfam" id="TIGR01070">
    <property type="entry name" value="mutS1"/>
    <property type="match status" value="1"/>
</dbReference>
<dbReference type="NCBIfam" id="NF003810">
    <property type="entry name" value="PRK05399.1"/>
    <property type="match status" value="1"/>
</dbReference>
<dbReference type="PANTHER" id="PTHR11361:SF34">
    <property type="entry name" value="DNA MISMATCH REPAIR PROTEIN MSH1, MITOCHONDRIAL"/>
    <property type="match status" value="1"/>
</dbReference>
<dbReference type="PANTHER" id="PTHR11361">
    <property type="entry name" value="DNA MISMATCH REPAIR PROTEIN MUTS FAMILY MEMBER"/>
    <property type="match status" value="1"/>
</dbReference>
<dbReference type="Pfam" id="PF01624">
    <property type="entry name" value="MutS_I"/>
    <property type="match status" value="1"/>
</dbReference>
<dbReference type="Pfam" id="PF05188">
    <property type="entry name" value="MutS_II"/>
    <property type="match status" value="1"/>
</dbReference>
<dbReference type="Pfam" id="PF05192">
    <property type="entry name" value="MutS_III"/>
    <property type="match status" value="1"/>
</dbReference>
<dbReference type="Pfam" id="PF05190">
    <property type="entry name" value="MutS_IV"/>
    <property type="match status" value="1"/>
</dbReference>
<dbReference type="Pfam" id="PF00488">
    <property type="entry name" value="MutS_V"/>
    <property type="match status" value="1"/>
</dbReference>
<dbReference type="PIRSF" id="PIRSF037677">
    <property type="entry name" value="DNA_mis_repair_Msh6"/>
    <property type="match status" value="1"/>
</dbReference>
<dbReference type="SMART" id="SM00534">
    <property type="entry name" value="MUTSac"/>
    <property type="match status" value="1"/>
</dbReference>
<dbReference type="SMART" id="SM00533">
    <property type="entry name" value="MUTSd"/>
    <property type="match status" value="1"/>
</dbReference>
<dbReference type="SUPFAM" id="SSF55271">
    <property type="entry name" value="DNA repair protein MutS, domain I"/>
    <property type="match status" value="1"/>
</dbReference>
<dbReference type="SUPFAM" id="SSF53150">
    <property type="entry name" value="DNA repair protein MutS, domain II"/>
    <property type="match status" value="1"/>
</dbReference>
<dbReference type="SUPFAM" id="SSF48334">
    <property type="entry name" value="DNA repair protein MutS, domain III"/>
    <property type="match status" value="1"/>
</dbReference>
<dbReference type="SUPFAM" id="SSF52540">
    <property type="entry name" value="P-loop containing nucleoside triphosphate hydrolases"/>
    <property type="match status" value="1"/>
</dbReference>
<dbReference type="PROSITE" id="PS00486">
    <property type="entry name" value="DNA_MISMATCH_REPAIR_2"/>
    <property type="match status" value="1"/>
</dbReference>
<reference key="1">
    <citation type="journal article" date="2006" name="Nat. Biotechnol.">
        <title>Complete genome of the mutualistic, N2-fixing grass endophyte Azoarcus sp. strain BH72.</title>
        <authorList>
            <person name="Krause A."/>
            <person name="Ramakumar A."/>
            <person name="Bartels D."/>
            <person name="Battistoni F."/>
            <person name="Bekel T."/>
            <person name="Boch J."/>
            <person name="Boehm M."/>
            <person name="Friedrich F."/>
            <person name="Hurek T."/>
            <person name="Krause L."/>
            <person name="Linke B."/>
            <person name="McHardy A.C."/>
            <person name="Sarkar A."/>
            <person name="Schneiker S."/>
            <person name="Syed A.A."/>
            <person name="Thauer R."/>
            <person name="Vorhoelter F.-J."/>
            <person name="Weidner S."/>
            <person name="Puehler A."/>
            <person name="Reinhold-Hurek B."/>
            <person name="Kaiser O."/>
            <person name="Goesmann A."/>
        </authorList>
    </citation>
    <scope>NUCLEOTIDE SEQUENCE [LARGE SCALE GENOMIC DNA]</scope>
    <source>
        <strain>BH72</strain>
    </source>
</reference>
<organism>
    <name type="scientific">Azoarcus sp. (strain BH72)</name>
    <dbReference type="NCBI Taxonomy" id="418699"/>
    <lineage>
        <taxon>Bacteria</taxon>
        <taxon>Pseudomonadati</taxon>
        <taxon>Pseudomonadota</taxon>
        <taxon>Betaproteobacteria</taxon>
        <taxon>Rhodocyclales</taxon>
        <taxon>Zoogloeaceae</taxon>
        <taxon>Azoarcus</taxon>
    </lineage>
</organism>
<proteinExistence type="inferred from homology"/>
<evidence type="ECO:0000255" key="1">
    <source>
        <dbReference type="HAMAP-Rule" id="MF_00096"/>
    </source>
</evidence>
<evidence type="ECO:0000256" key="2">
    <source>
        <dbReference type="SAM" id="MobiDB-lite"/>
    </source>
</evidence>
<evidence type="ECO:0000305" key="3"/>
<sequence>MSISKIESVNAEKQSPVGTEIGTHTPMMQQYLRIKEQHPDTLLFYRMGDFYELFFEDAEKAARLLDITLTTRGQSAGMPIRMAGVPFHAVEQYLARLVKLGESVVIAEQVGEPGATKGPMERAVSRIVTPGTLTDAALLDDRRDALLLAANMHRGVLGMAWLNLANGEFRLMECPAESLQAQFERLRPAEVLIPDGLALPLMETLAPALRRLADWQFDADTAHRLLTTHFGTRDLAGFGVEEAPVALGAAAALYDYAKATQRQSLAHLTGLRLEREAEFLRLDAATRRNLELTETLRGEPSPTLLSLLDTCMTSMGSRWLRHALHHPLRDRTIPAARQQAVAALVGDGDGLHAQAVRGALRGVADVDRITGRIALRNARPRDLSALRESLSRLPELRQTLAQIGDEGMVGGLAAALDVQPELLQCLQRAIADEPAAMVRDGGVIAAGYDAELDELRGIQTNCGEFLMALEARERERSGIANLKVEFNKVHGFYIEVSHANADKVPDDYRRRQTLKNVERYITPELKAFEDKALSAQERALAREKALYEALLDALSPYIPALQGCARALATLDGLAAFAEAALRYGYVRPVFSDQPGIEIRGGRHPVVERQVEDFIQNDARLGSTRRMLMITGPNMGGKSTFMRQVALICLLAHVGSFVPAQSAVLGPLDAIFTRIGASDDLASGRSTFMVEMTEASAILHGATEHSLVLMDEIGRGTSTFDGLALAFAIARHLLEKNRSLTLFATHYFELTRLNGEYPECANVHLDAVEHGHRIVFLHALEDGPASQSYGIEVAALAGIPAPVIRDAKRRLRALENREVGAGPQADLFAALPDDDDAPLSHPVLIALAEIDPDSLSPREALERLYALKRLSA</sequence>
<name>MUTS_AZOSB</name>
<accession>A1K764</accession>
<keyword id="KW-0067">ATP-binding</keyword>
<keyword id="KW-0227">DNA damage</keyword>
<keyword id="KW-0234">DNA repair</keyword>
<keyword id="KW-0238">DNA-binding</keyword>
<keyword id="KW-0547">Nucleotide-binding</keyword>
<keyword id="KW-1185">Reference proteome</keyword>
<protein>
    <recommendedName>
        <fullName evidence="1">DNA mismatch repair protein MutS</fullName>
    </recommendedName>
</protein>
<feature type="chain" id="PRO_0000335114" description="DNA mismatch repair protein MutS">
    <location>
        <begin position="1"/>
        <end position="872"/>
    </location>
</feature>
<feature type="region of interest" description="Disordered" evidence="2">
    <location>
        <begin position="1"/>
        <end position="22"/>
    </location>
</feature>
<feature type="compositionally biased region" description="Polar residues" evidence="2">
    <location>
        <begin position="1"/>
        <end position="17"/>
    </location>
</feature>
<feature type="binding site" evidence="1">
    <location>
        <begin position="632"/>
        <end position="639"/>
    </location>
    <ligand>
        <name>ATP</name>
        <dbReference type="ChEBI" id="CHEBI:30616"/>
    </ligand>
</feature>
<comment type="function">
    <text evidence="1">This protein is involved in the repair of mismatches in DNA. It is possible that it carries out the mismatch recognition step. This protein has a weak ATPase activity.</text>
</comment>
<comment type="similarity">
    <text evidence="1">Belongs to the DNA mismatch repair MutS family.</text>
</comment>
<comment type="sequence caution" evidence="3">
    <conflict type="erroneous initiation">
        <sequence resource="EMBL-CDS" id="CAL94669"/>
    </conflict>
</comment>
<gene>
    <name evidence="1" type="primary">mutS</name>
    <name type="ordered locus">azo2052</name>
</gene>